<reference key="1">
    <citation type="book" date="2006" name="Gram positive pathogens, 2nd edition">
        <title>The Staphylococcus aureus NCTC 8325 genome.</title>
        <editorList>
            <person name="Fischetti V."/>
            <person name="Novick R."/>
            <person name="Ferretti J."/>
            <person name="Portnoy D."/>
            <person name="Rood J."/>
        </editorList>
        <authorList>
            <person name="Gillaspy A.F."/>
            <person name="Worrell V."/>
            <person name="Orvis J."/>
            <person name="Roe B.A."/>
            <person name="Dyer D.W."/>
            <person name="Iandolo J.J."/>
        </authorList>
    </citation>
    <scope>NUCLEOTIDE SEQUENCE [LARGE SCALE GENOMIC DNA]</scope>
    <source>
        <strain>NCTC 8325 / PS 47</strain>
    </source>
</reference>
<reference key="2">
    <citation type="journal article" date="2010" name="Biochimie">
        <title>Purification and biochemical characterization of Mur ligases from Staphylococcus aureus.</title>
        <authorList>
            <person name="Patin D."/>
            <person name="Boniface A."/>
            <person name="Kovac A."/>
            <person name="Herve M."/>
            <person name="Dementin S."/>
            <person name="Barreteau H."/>
            <person name="Mengin-Lecreulx D."/>
            <person name="Blanot D."/>
        </authorList>
    </citation>
    <scope>FUNCTION</scope>
    <scope>CATALYTIC ACTIVITY</scope>
    <scope>BIOPHYSICOCHEMICAL PROPERTIES</scope>
    <scope>IDENTIFICATION BY MASS SPECTROMETRY</scope>
    <source>
        <strain>NCTC 8325 / PS 47</strain>
    </source>
</reference>
<reference key="3">
    <citation type="journal article" date="2013" name="Eur. J. Med. Chem.">
        <title>Structure-activity relationships of new cyanothiophene inhibitors of the essential peptidoglycan biosynthesis enzyme MurF.</title>
        <authorList>
            <person name="Hrast M."/>
            <person name="Turk S."/>
            <person name="Sosic I."/>
            <person name="Knez D."/>
            <person name="Randall C.P."/>
            <person name="Barreteau H."/>
            <person name="Contreras-Martel C."/>
            <person name="Dessen A."/>
            <person name="O'Neill A.J."/>
            <person name="Mengin-Lecreulx D."/>
            <person name="Blanot D."/>
            <person name="Gobec S."/>
        </authorList>
    </citation>
    <scope>BIOTECHNOLOGY</scope>
</reference>
<protein>
    <recommendedName>
        <fullName evidence="1">UDP-N-acetylmuramoyl-tripeptide--D-alanyl-D-alanine ligase</fullName>
        <ecNumber evidence="1 2">6.3.2.10</ecNumber>
    </recommendedName>
    <alternativeName>
        <fullName evidence="1">D-alanyl-D-alanine-adding enzyme</fullName>
    </alternativeName>
</protein>
<sequence length="452" mass="50053">MINVTLKQIQSWIPCEIEDQFLNQEINGVTIDSRAISKNMLFIPFKGENVDGHRFVSKALQDGAGAAFYQRGTPIDENVSGPIIWVEDTLTALQQLAQAYLRHVNPKVIAVTGSNGKTTTKDMIESVLHTEFKVKKTQGNYNNEIGLPLTILELDNDTEISILEMGMSGFHEIEFLSNLAQPDIAVITNIGESHMQDLGSREGIAKAKSEITIGLKDNGTFIYDGDEPLLKPHVKEVENAKCISIGVATDNALVCSVDDRDTTGISFTINNKEHYDLPILGKHNMKNATIAIAVGHELGLTYNTIYQNLKNVSLTGMRMEQHTLENDITVINDAYNASPTSMRAAIDTLSTLTGRRILILGDVLELGENSKEMHIGVGNYLEEKHIDVLYTFGNEAKYIYDSGQQHVEKAQHFNSKDDMIEVLINDLKAHDRVLVKGSRGMKLEEVVNALIS</sequence>
<dbReference type="EC" id="6.3.2.10" evidence="1 2"/>
<dbReference type="EMBL" id="CP000253">
    <property type="protein sequence ID" value="ABD31351.1"/>
    <property type="molecule type" value="Genomic_DNA"/>
</dbReference>
<dbReference type="RefSeq" id="WP_000611465.1">
    <property type="nucleotide sequence ID" value="NZ_LS483365.1"/>
</dbReference>
<dbReference type="RefSeq" id="YP_500796.1">
    <property type="nucleotide sequence ID" value="NC_007795.1"/>
</dbReference>
<dbReference type="SMR" id="Q2FWH4"/>
<dbReference type="STRING" id="93061.SAOUHSC_02317"/>
<dbReference type="PaxDb" id="1280-SAXN108_2327"/>
<dbReference type="GeneID" id="3920942"/>
<dbReference type="KEGG" id="sao:SAOUHSC_02317"/>
<dbReference type="PATRIC" id="fig|93061.5.peg.2100"/>
<dbReference type="eggNOG" id="COG0770">
    <property type="taxonomic scope" value="Bacteria"/>
</dbReference>
<dbReference type="HOGENOM" id="CLU_031507_4_0_9"/>
<dbReference type="OrthoDB" id="9801978at2"/>
<dbReference type="BioCyc" id="MetaCyc:MONOMER-12255"/>
<dbReference type="UniPathway" id="UPA00219"/>
<dbReference type="Proteomes" id="UP000008816">
    <property type="component" value="Chromosome"/>
</dbReference>
<dbReference type="GO" id="GO:0005737">
    <property type="term" value="C:cytoplasm"/>
    <property type="evidence" value="ECO:0007669"/>
    <property type="project" value="UniProtKB-SubCell"/>
</dbReference>
<dbReference type="GO" id="GO:0005524">
    <property type="term" value="F:ATP binding"/>
    <property type="evidence" value="ECO:0007669"/>
    <property type="project" value="UniProtKB-UniRule"/>
</dbReference>
<dbReference type="GO" id="GO:0047480">
    <property type="term" value="F:UDP-N-acetylmuramoyl-tripeptide-D-alanyl-D-alanine ligase activity"/>
    <property type="evidence" value="ECO:0007669"/>
    <property type="project" value="UniProtKB-UniRule"/>
</dbReference>
<dbReference type="GO" id="GO:0051301">
    <property type="term" value="P:cell division"/>
    <property type="evidence" value="ECO:0007669"/>
    <property type="project" value="UniProtKB-KW"/>
</dbReference>
<dbReference type="GO" id="GO:0071555">
    <property type="term" value="P:cell wall organization"/>
    <property type="evidence" value="ECO:0007669"/>
    <property type="project" value="UniProtKB-KW"/>
</dbReference>
<dbReference type="GO" id="GO:0009252">
    <property type="term" value="P:peptidoglycan biosynthetic process"/>
    <property type="evidence" value="ECO:0007669"/>
    <property type="project" value="UniProtKB-UniRule"/>
</dbReference>
<dbReference type="GO" id="GO:0008360">
    <property type="term" value="P:regulation of cell shape"/>
    <property type="evidence" value="ECO:0007669"/>
    <property type="project" value="UniProtKB-KW"/>
</dbReference>
<dbReference type="Gene3D" id="3.90.190.20">
    <property type="entry name" value="Mur ligase, C-terminal domain"/>
    <property type="match status" value="1"/>
</dbReference>
<dbReference type="Gene3D" id="3.40.1190.10">
    <property type="entry name" value="Mur-like, catalytic domain"/>
    <property type="match status" value="1"/>
</dbReference>
<dbReference type="Gene3D" id="3.40.1390.10">
    <property type="entry name" value="MurE/MurF, N-terminal domain"/>
    <property type="match status" value="1"/>
</dbReference>
<dbReference type="HAMAP" id="MF_02019">
    <property type="entry name" value="MurF"/>
    <property type="match status" value="1"/>
</dbReference>
<dbReference type="InterPro" id="IPR036565">
    <property type="entry name" value="Mur-like_cat_sf"/>
</dbReference>
<dbReference type="InterPro" id="IPR004101">
    <property type="entry name" value="Mur_ligase_C"/>
</dbReference>
<dbReference type="InterPro" id="IPR036615">
    <property type="entry name" value="Mur_ligase_C_dom_sf"/>
</dbReference>
<dbReference type="InterPro" id="IPR013221">
    <property type="entry name" value="Mur_ligase_cen"/>
</dbReference>
<dbReference type="InterPro" id="IPR000713">
    <property type="entry name" value="Mur_ligase_N"/>
</dbReference>
<dbReference type="InterPro" id="IPR051046">
    <property type="entry name" value="MurCDEF_CellWall_CoF430Synth"/>
</dbReference>
<dbReference type="InterPro" id="IPR035911">
    <property type="entry name" value="MurE/MurF_N"/>
</dbReference>
<dbReference type="InterPro" id="IPR005863">
    <property type="entry name" value="UDP-N-AcMur_synth"/>
</dbReference>
<dbReference type="NCBIfam" id="TIGR01143">
    <property type="entry name" value="murF"/>
    <property type="match status" value="1"/>
</dbReference>
<dbReference type="PANTHER" id="PTHR43024">
    <property type="entry name" value="UDP-N-ACETYLMURAMOYL-TRIPEPTIDE--D-ALANYL-D-ALANINE LIGASE"/>
    <property type="match status" value="1"/>
</dbReference>
<dbReference type="PANTHER" id="PTHR43024:SF1">
    <property type="entry name" value="UDP-N-ACETYLMURAMOYL-TRIPEPTIDE--D-ALANYL-D-ALANINE LIGASE"/>
    <property type="match status" value="1"/>
</dbReference>
<dbReference type="Pfam" id="PF01225">
    <property type="entry name" value="Mur_ligase"/>
    <property type="match status" value="1"/>
</dbReference>
<dbReference type="Pfam" id="PF02875">
    <property type="entry name" value="Mur_ligase_C"/>
    <property type="match status" value="1"/>
</dbReference>
<dbReference type="Pfam" id="PF08245">
    <property type="entry name" value="Mur_ligase_M"/>
    <property type="match status" value="1"/>
</dbReference>
<dbReference type="SUPFAM" id="SSF53623">
    <property type="entry name" value="MurD-like peptide ligases, catalytic domain"/>
    <property type="match status" value="1"/>
</dbReference>
<dbReference type="SUPFAM" id="SSF53244">
    <property type="entry name" value="MurD-like peptide ligases, peptide-binding domain"/>
    <property type="match status" value="1"/>
</dbReference>
<dbReference type="SUPFAM" id="SSF63418">
    <property type="entry name" value="MurE/MurF N-terminal domain"/>
    <property type="match status" value="1"/>
</dbReference>
<feature type="initiator methionine" description="Removed" evidence="2">
    <location>
        <position position="1"/>
    </location>
</feature>
<feature type="chain" id="PRO_0000457174" description="UDP-N-acetylmuramoyl-tripeptide--D-alanyl-D-alanine ligase">
    <location>
        <begin position="2"/>
        <end position="452"/>
    </location>
</feature>
<feature type="binding site" evidence="1">
    <location>
        <begin position="113"/>
        <end position="119"/>
    </location>
    <ligand>
        <name>ATP</name>
        <dbReference type="ChEBI" id="CHEBI:30616"/>
    </ligand>
</feature>
<organism>
    <name type="scientific">Staphylococcus aureus (strain NCTC 8325 / PS 47)</name>
    <dbReference type="NCBI Taxonomy" id="93061"/>
    <lineage>
        <taxon>Bacteria</taxon>
        <taxon>Bacillati</taxon>
        <taxon>Bacillota</taxon>
        <taxon>Bacilli</taxon>
        <taxon>Bacillales</taxon>
        <taxon>Staphylococcaceae</taxon>
        <taxon>Staphylococcus</taxon>
    </lineage>
</organism>
<gene>
    <name evidence="1 4" type="primary">murF</name>
    <name evidence="5" type="ordered locus">SAOUHSC_02317</name>
</gene>
<proteinExistence type="evidence at protein level"/>
<keyword id="KW-0067">ATP-binding</keyword>
<keyword id="KW-0131">Cell cycle</keyword>
<keyword id="KW-0132">Cell division</keyword>
<keyword id="KW-0133">Cell shape</keyword>
<keyword id="KW-0961">Cell wall biogenesis/degradation</keyword>
<keyword id="KW-0963">Cytoplasm</keyword>
<keyword id="KW-0436">Ligase</keyword>
<keyword id="KW-0547">Nucleotide-binding</keyword>
<keyword id="KW-0573">Peptidoglycan synthesis</keyword>
<keyword id="KW-1185">Reference proteome</keyword>
<evidence type="ECO:0000255" key="1">
    <source>
        <dbReference type="HAMAP-Rule" id="MF_02019"/>
    </source>
</evidence>
<evidence type="ECO:0000269" key="2">
    <source>
    </source>
</evidence>
<evidence type="ECO:0000269" key="3">
    <source>
    </source>
</evidence>
<evidence type="ECO:0000303" key="4">
    <source>
    </source>
</evidence>
<evidence type="ECO:0000312" key="5">
    <source>
        <dbReference type="EMBL" id="ABD31351.1"/>
    </source>
</evidence>
<accession>Q2FWH4</accession>
<comment type="function">
    <text evidence="2">Involved in cell wall formation (PubMed:20659527). Catalyzes the final step in the synthesis of UDP-N-acetylmuramoyl-pentapeptide, the precursor of murein (PubMed:20659527). Catalyzes the addition of D-alanyl-D-alanine to UDP-MurNAc-L-alanyl-gamma-D-glutamyl-L-lysine (PubMed:20659527). In vitro, can also use the mesodiaminopimelic acid-containing form of UDP-MurNAc-tripeptide, with the same efficiency, revealing that the discrimination for the amino acid residue at the third position of the peptide in the peptidoglycans is entirely supported by MurE (PubMed:20659527).</text>
</comment>
<comment type="catalytic activity">
    <reaction evidence="1 2">
        <text>UDP-N-acetyl-alpha-D-muramoyl-L-alanyl-gamma-D-glutamyl-L-lysine + D-alanyl-D-alanine + ATP = UDP-N-acetyl-alpha-D-muramoyl-L-alanyl-gamma-D-glutamyl-L-lysyl-D-alanyl-D-alanine + ADP + phosphate + H(+)</text>
        <dbReference type="Rhea" id="RHEA:16085"/>
        <dbReference type="ChEBI" id="CHEBI:15378"/>
        <dbReference type="ChEBI" id="CHEBI:30616"/>
        <dbReference type="ChEBI" id="CHEBI:43474"/>
        <dbReference type="ChEBI" id="CHEBI:57822"/>
        <dbReference type="ChEBI" id="CHEBI:70758"/>
        <dbReference type="ChEBI" id="CHEBI:83903"/>
        <dbReference type="ChEBI" id="CHEBI:456216"/>
        <dbReference type="EC" id="6.3.2.10"/>
    </reaction>
</comment>
<comment type="biophysicochemical properties">
    <kinetics>
        <KM evidence="2">0.11 mM for ATP</KM>
        <KM evidence="2">0.046 mM for UDP-MurNAc-L-alanyl-gamma-D-glutamyl-L-lysine</KM>
        <KM evidence="2">0.24 mM for D-alanyl-D-alanine</KM>
        <Vmax evidence="2">71.0 umol/min/mg enzyme</Vmax>
    </kinetics>
    <phDependence>
        <text evidence="2">Optimum pH is 8.4-9.0.</text>
    </phDependence>
</comment>
<comment type="pathway">
    <text evidence="1">Cell wall biogenesis; peptidoglycan biosynthesis.</text>
</comment>
<comment type="subcellular location">
    <subcellularLocation>
        <location evidence="1">Cytoplasm</location>
    </subcellularLocation>
</comment>
<comment type="biotechnology">
    <text evidence="3">As MurF has no human counterpart, it represents an attractive target for the development of new antibacterial drugs. A new series of cyanothiophene-based inhibitors have been designed and synthesized, and identified as micromolar inhibitors of MurF from S.aureus.</text>
</comment>
<comment type="similarity">
    <text evidence="1">Belongs to the MurCDEF family. MurF subfamily.</text>
</comment>
<name>MURF_STAA8</name>